<dbReference type="EC" id="1.14.17.1" evidence="1"/>
<dbReference type="EMBL" id="AB029430">
    <property type="protein sequence ID" value="BAA82274.1"/>
    <property type="molecule type" value="mRNA"/>
</dbReference>
<dbReference type="RefSeq" id="NP_001075239.2">
    <property type="nucleotide sequence ID" value="NM_001081770.2"/>
</dbReference>
<dbReference type="SMR" id="Q9XTA0"/>
<dbReference type="FunCoup" id="Q9XTA0">
    <property type="interactions" value="65"/>
</dbReference>
<dbReference type="STRING" id="9796.ENSECAP00000017330"/>
<dbReference type="GlyCosmos" id="Q9XTA0">
    <property type="glycosylation" value="3 sites, No reported glycans"/>
</dbReference>
<dbReference type="PaxDb" id="9796-ENSECAP00000017330"/>
<dbReference type="GeneID" id="791247"/>
<dbReference type="KEGG" id="ecb:791247"/>
<dbReference type="CTD" id="1621"/>
<dbReference type="InParanoid" id="Q9XTA0"/>
<dbReference type="OrthoDB" id="129121at2759"/>
<dbReference type="UniPathway" id="UPA00748">
    <property type="reaction ID" value="UER00735"/>
</dbReference>
<dbReference type="Proteomes" id="UP000002281">
    <property type="component" value="Unplaced"/>
</dbReference>
<dbReference type="GO" id="GO:0034466">
    <property type="term" value="C:chromaffin granule lumen"/>
    <property type="evidence" value="ECO:0007669"/>
    <property type="project" value="UniProtKB-SubCell"/>
</dbReference>
<dbReference type="GO" id="GO:0042584">
    <property type="term" value="C:chromaffin granule membrane"/>
    <property type="evidence" value="ECO:0007669"/>
    <property type="project" value="UniProtKB-SubCell"/>
</dbReference>
<dbReference type="GO" id="GO:0005615">
    <property type="term" value="C:extracellular space"/>
    <property type="evidence" value="ECO:0000250"/>
    <property type="project" value="UniProtKB"/>
</dbReference>
<dbReference type="GO" id="GO:0034774">
    <property type="term" value="C:secretory granule lumen"/>
    <property type="evidence" value="ECO:0000250"/>
    <property type="project" value="UniProtKB"/>
</dbReference>
<dbReference type="GO" id="GO:0030667">
    <property type="term" value="C:secretory granule membrane"/>
    <property type="evidence" value="ECO:0000250"/>
    <property type="project" value="UniProtKB"/>
</dbReference>
<dbReference type="GO" id="GO:0030658">
    <property type="term" value="C:transport vesicle membrane"/>
    <property type="evidence" value="ECO:0007669"/>
    <property type="project" value="UniProtKB-SubCell"/>
</dbReference>
<dbReference type="GO" id="GO:0005507">
    <property type="term" value="F:copper ion binding"/>
    <property type="evidence" value="ECO:0000250"/>
    <property type="project" value="UniProtKB"/>
</dbReference>
<dbReference type="GO" id="GO:0004500">
    <property type="term" value="F:dopamine beta-monooxygenase activity"/>
    <property type="evidence" value="ECO:0000250"/>
    <property type="project" value="UniProtKB"/>
</dbReference>
<dbReference type="GO" id="GO:0031418">
    <property type="term" value="F:L-ascorbic acid binding"/>
    <property type="evidence" value="ECO:0007669"/>
    <property type="project" value="UniProtKB-KW"/>
</dbReference>
<dbReference type="GO" id="GO:0042420">
    <property type="term" value="P:dopamine catabolic process"/>
    <property type="evidence" value="ECO:0000250"/>
    <property type="project" value="UniProtKB"/>
</dbReference>
<dbReference type="GO" id="GO:0042421">
    <property type="term" value="P:norepinephrine biosynthetic process"/>
    <property type="evidence" value="ECO:0000250"/>
    <property type="project" value="UniProtKB"/>
</dbReference>
<dbReference type="GO" id="GO:0006589">
    <property type="term" value="P:octopamine biosynthetic process"/>
    <property type="evidence" value="ECO:0000318"/>
    <property type="project" value="GO_Central"/>
</dbReference>
<dbReference type="CDD" id="cd09631">
    <property type="entry name" value="DOMON_DOH"/>
    <property type="match status" value="1"/>
</dbReference>
<dbReference type="FunFam" id="2.60.120.310:FF:000003">
    <property type="entry name" value="Dopamine beta-hydroxylase"/>
    <property type="match status" value="1"/>
</dbReference>
<dbReference type="FunFam" id="2.60.120.230:FF:000001">
    <property type="entry name" value="Monooxygenase, DBH-like 1"/>
    <property type="match status" value="1"/>
</dbReference>
<dbReference type="Gene3D" id="2.60.120.230">
    <property type="match status" value="1"/>
</dbReference>
<dbReference type="Gene3D" id="2.60.120.310">
    <property type="entry name" value="Copper type II, ascorbate-dependent monooxygenase, N-terminal domain"/>
    <property type="match status" value="1"/>
</dbReference>
<dbReference type="InterPro" id="IPR014784">
    <property type="entry name" value="Cu2_ascorb_mOase-like_C"/>
</dbReference>
<dbReference type="InterPro" id="IPR020611">
    <property type="entry name" value="Cu2_ascorb_mOase_CS-1"/>
</dbReference>
<dbReference type="InterPro" id="IPR014783">
    <property type="entry name" value="Cu2_ascorb_mOase_CS-2"/>
</dbReference>
<dbReference type="InterPro" id="IPR000323">
    <property type="entry name" value="Cu2_ascorb_mOase_N"/>
</dbReference>
<dbReference type="InterPro" id="IPR036939">
    <property type="entry name" value="Cu2_ascorb_mOase_N_sf"/>
</dbReference>
<dbReference type="InterPro" id="IPR024548">
    <property type="entry name" value="Cu2_monoox_C"/>
</dbReference>
<dbReference type="InterPro" id="IPR000945">
    <property type="entry name" value="DBH-like"/>
</dbReference>
<dbReference type="InterPro" id="IPR045266">
    <property type="entry name" value="DOH_DOMON"/>
</dbReference>
<dbReference type="InterPro" id="IPR005018">
    <property type="entry name" value="DOMON_domain"/>
</dbReference>
<dbReference type="InterPro" id="IPR008977">
    <property type="entry name" value="PHM/PNGase_F_dom_sf"/>
</dbReference>
<dbReference type="InterPro" id="IPR028460">
    <property type="entry name" value="Tbh/DBH"/>
</dbReference>
<dbReference type="PANTHER" id="PTHR10157">
    <property type="entry name" value="DOPAMINE BETA HYDROXYLASE RELATED"/>
    <property type="match status" value="1"/>
</dbReference>
<dbReference type="PANTHER" id="PTHR10157:SF29">
    <property type="entry name" value="DOPAMINE BETA-HYDROXYLASE"/>
    <property type="match status" value="1"/>
</dbReference>
<dbReference type="Pfam" id="PF03712">
    <property type="entry name" value="Cu2_monoox_C"/>
    <property type="match status" value="1"/>
</dbReference>
<dbReference type="Pfam" id="PF01082">
    <property type="entry name" value="Cu2_monooxygen"/>
    <property type="match status" value="1"/>
</dbReference>
<dbReference type="Pfam" id="PF03351">
    <property type="entry name" value="DOMON"/>
    <property type="match status" value="1"/>
</dbReference>
<dbReference type="PRINTS" id="PR00767">
    <property type="entry name" value="DBMONOXGNASE"/>
</dbReference>
<dbReference type="SMART" id="SM00664">
    <property type="entry name" value="DoH"/>
    <property type="match status" value="1"/>
</dbReference>
<dbReference type="SUPFAM" id="SSF49742">
    <property type="entry name" value="PHM/PNGase F"/>
    <property type="match status" value="2"/>
</dbReference>
<dbReference type="PROSITE" id="PS00084">
    <property type="entry name" value="CU2_MONOOXYGENASE_1"/>
    <property type="match status" value="1"/>
</dbReference>
<dbReference type="PROSITE" id="PS00085">
    <property type="entry name" value="CU2_MONOOXYGENASE_2"/>
    <property type="match status" value="1"/>
</dbReference>
<dbReference type="PROSITE" id="PS50836">
    <property type="entry name" value="DOMON"/>
    <property type="match status" value="1"/>
</dbReference>
<proteinExistence type="evidence at transcript level"/>
<gene>
    <name type="primary">DBH</name>
</gene>
<keyword id="KW-0127">Catecholamine biosynthesis</keyword>
<keyword id="KW-0186">Copper</keyword>
<keyword id="KW-0968">Cytoplasmic vesicle</keyword>
<keyword id="KW-1015">Disulfide bond</keyword>
<keyword id="KW-0325">Glycoprotein</keyword>
<keyword id="KW-0472">Membrane</keyword>
<keyword id="KW-0479">Metal-binding</keyword>
<keyword id="KW-0503">Monooxygenase</keyword>
<keyword id="KW-0560">Oxidoreductase</keyword>
<keyword id="KW-1185">Reference proteome</keyword>
<keyword id="KW-0964">Secreted</keyword>
<keyword id="KW-0735">Signal-anchor</keyword>
<keyword id="KW-0812">Transmembrane</keyword>
<keyword id="KW-1133">Transmembrane helix</keyword>
<keyword id="KW-0847">Vitamin C</keyword>
<reference key="1">
    <citation type="journal article" date="2002" name="DNA Seq.">
        <title>Molecular cloning, nucleotide sequence and presence of multiple functional polyadenylation signals in the 3'-untranslated region of equine dopamine beta-hydroxylase cDNA.</title>
        <authorList>
            <person name="Sato F."/>
            <person name="Hasegawa T."/>
            <person name="Katayama Y."/>
            <person name="Ishida N."/>
        </authorList>
    </citation>
    <scope>NUCLEOTIDE SEQUENCE [MRNA]</scope>
    <scope>TISSUE SPECIFICITY</scope>
</reference>
<accession>Q9XTA0</accession>
<name>DOPO_HORSE</name>
<protein>
    <recommendedName>
        <fullName>Dopamine beta-hydroxylase</fullName>
        <ecNumber evidence="1">1.14.17.1</ecNumber>
    </recommendedName>
    <component>
        <recommendedName>
            <fullName>Soluble dopamine beta-hydroxylase</fullName>
        </recommendedName>
    </component>
</protein>
<evidence type="ECO:0000250" key="1">
    <source>
        <dbReference type="UniProtKB" id="P09172"/>
    </source>
</evidence>
<evidence type="ECO:0000250" key="2">
    <source>
        <dbReference type="UniProtKB" id="P15101"/>
    </source>
</evidence>
<evidence type="ECO:0000255" key="3"/>
<evidence type="ECO:0000255" key="4">
    <source>
        <dbReference type="PROSITE-ProRule" id="PRU00246"/>
    </source>
</evidence>
<evidence type="ECO:0000256" key="5">
    <source>
        <dbReference type="SAM" id="MobiDB-lite"/>
    </source>
</evidence>
<evidence type="ECO:0000269" key="6">
    <source>
    </source>
</evidence>
<evidence type="ECO:0000305" key="7"/>
<organism>
    <name type="scientific">Equus caballus</name>
    <name type="common">Horse</name>
    <dbReference type="NCBI Taxonomy" id="9796"/>
    <lineage>
        <taxon>Eukaryota</taxon>
        <taxon>Metazoa</taxon>
        <taxon>Chordata</taxon>
        <taxon>Craniata</taxon>
        <taxon>Vertebrata</taxon>
        <taxon>Euteleostomi</taxon>
        <taxon>Mammalia</taxon>
        <taxon>Eutheria</taxon>
        <taxon>Laurasiatheria</taxon>
        <taxon>Perissodactyla</taxon>
        <taxon>Equidae</taxon>
        <taxon>Equus</taxon>
    </lineage>
</organism>
<sequence>MKVPSPSVREAASMYGTAVAIFLVILVAALQGSEPPESPFPYRIPLDPEGTLELSWNVSYVQETIHFQLLVRELKAGVLFGMSDRGELENADLVVLWTDGDSAYFGDAWSDQKGWIHLDAQQDYQLLRAQRTPEGLSLLFKRPFGTCDPKDYLIEDGTVHLVYGILEEPFWSLEAINTSALHTGLQRVQLLKPNVSVPALPADMRTMEVRAPDVLVPGQETTYWCYITELPDGFPRHHIVMYEPIVTEGNEALVHHMEVFQCAAEFESFPQFNGPCDSKMKPSRLNYCRNVLAAWALGAKAFYYPEEAGLAFGGAGSSRFLRLEVHYHNPLKIEGRRDSSGIRLYYTATLRRFDAGIMELGLVYTPVMAIPPQETAFVLTGYCTDKCTQLALPPSGIHIFASQLHTHLTGRKVVTVLARDGREREVVNRDDHYSPHFQEIRMLKKVVSVHPGDVLITSCTYNTEDRKLATVGGFGILEEMCVNYVHYYPQTQLELCKSAVDPGFLQKYFHFVNRFNGEEVCTCPQASVPEQFATVPWNSFNRQVLSALYGFAPISMHCNRSSAVRFQGDWNLQPLPEIISKLEEPTPRCPASRGRSPAGPTVVDIGGGKG</sequence>
<feature type="chain" id="PRO_0000305213" description="Dopamine beta-hydroxylase">
    <location>
        <begin position="1"/>
        <end position="610"/>
    </location>
</feature>
<feature type="chain" id="PRO_0000308208" description="Soluble dopamine beta-hydroxylase" evidence="3">
    <location>
        <begin position="33"/>
        <end position="610"/>
    </location>
</feature>
<feature type="topological domain" description="Cytoplasmic" evidence="3">
    <location>
        <begin position="1"/>
        <end position="9"/>
    </location>
</feature>
<feature type="transmembrane region" description="Helical; Signal-anchor for type II membrane protein" evidence="3">
    <location>
        <begin position="10"/>
        <end position="30"/>
    </location>
</feature>
<feature type="topological domain" description="Intragranular" evidence="3">
    <location>
        <begin position="31"/>
        <end position="610"/>
    </location>
</feature>
<feature type="domain" description="DOMON" evidence="4">
    <location>
        <begin position="50"/>
        <end position="166"/>
    </location>
</feature>
<feature type="region of interest" description="Disordered" evidence="5">
    <location>
        <begin position="586"/>
        <end position="610"/>
    </location>
</feature>
<feature type="active site" evidence="3">
    <location>
        <position position="223"/>
    </location>
</feature>
<feature type="active site" evidence="3">
    <location>
        <position position="405"/>
    </location>
</feature>
<feature type="binding site" evidence="1">
    <location>
        <position position="255"/>
    </location>
    <ligand>
        <name>Cu(2+)</name>
        <dbReference type="ChEBI" id="CHEBI:29036"/>
        <label>A</label>
    </ligand>
</feature>
<feature type="binding site" evidence="1">
    <location>
        <position position="256"/>
    </location>
    <ligand>
        <name>Cu(2+)</name>
        <dbReference type="ChEBI" id="CHEBI:29036"/>
        <label>A</label>
    </ligand>
</feature>
<feature type="binding site" evidence="1">
    <location>
        <position position="326"/>
    </location>
    <ligand>
        <name>Cu(2+)</name>
        <dbReference type="ChEBI" id="CHEBI:29036"/>
        <label>A</label>
    </ligand>
</feature>
<feature type="binding site" evidence="1">
    <location>
        <position position="405"/>
    </location>
    <ligand>
        <name>Cu(2+)</name>
        <dbReference type="ChEBI" id="CHEBI:29036"/>
        <label>B</label>
    </ligand>
</feature>
<feature type="binding site" evidence="1">
    <location>
        <position position="407"/>
    </location>
    <ligand>
        <name>Cu(2+)</name>
        <dbReference type="ChEBI" id="CHEBI:29036"/>
        <label>B</label>
    </ligand>
</feature>
<feature type="binding site" evidence="1">
    <location>
        <position position="480"/>
    </location>
    <ligand>
        <name>Cu(2+)</name>
        <dbReference type="ChEBI" id="CHEBI:29036"/>
        <label>B</label>
    </ligand>
</feature>
<feature type="site" description="Cleavage" evidence="2">
    <location>
        <begin position="32"/>
        <end position="33"/>
    </location>
</feature>
<feature type="glycosylation site" description="N-linked (GlcNAc...) asparagine" evidence="3">
    <location>
        <position position="57"/>
    </location>
</feature>
<feature type="glycosylation site" description="N-linked (GlcNAc...) asparagine" evidence="3">
    <location>
        <position position="177"/>
    </location>
</feature>
<feature type="glycosylation site" description="N-linked (GlcNAc...) asparagine" evidence="3">
    <location>
        <position position="194"/>
    </location>
</feature>
<feature type="disulfide bond" evidence="1">
    <location>
        <begin position="147"/>
        <end position="589"/>
    </location>
</feature>
<feature type="disulfide bond" evidence="1">
    <location>
        <begin position="225"/>
        <end position="276"/>
    </location>
</feature>
<feature type="disulfide bond" evidence="1">
    <location>
        <begin position="262"/>
        <end position="288"/>
    </location>
</feature>
<feature type="disulfide bond" evidence="1">
    <location>
        <begin position="383"/>
        <end position="496"/>
    </location>
</feature>
<feature type="disulfide bond" evidence="1">
    <location>
        <begin position="387"/>
        <end position="558"/>
    </location>
</feature>
<feature type="disulfide bond" evidence="1">
    <location>
        <begin position="459"/>
        <end position="481"/>
    </location>
</feature>
<feature type="disulfide bond" description="Interchain" evidence="1">
    <location>
        <position position="521"/>
    </location>
</feature>
<feature type="disulfide bond" description="Interchain" evidence="1">
    <location>
        <position position="523"/>
    </location>
</feature>
<comment type="function">
    <text evidence="1">Catalyzes the hydroxylation of dopamine to noradrenaline (also known as norepinephrine), and is thus vital for regulation of these neurotransmitters.</text>
</comment>
<comment type="catalytic activity">
    <reaction evidence="1">
        <text>dopamine + 2 L-ascorbate + O2 = (R)-noradrenaline + 2 monodehydro-L-ascorbate radical + H2O</text>
        <dbReference type="Rhea" id="RHEA:19117"/>
        <dbReference type="ChEBI" id="CHEBI:15377"/>
        <dbReference type="ChEBI" id="CHEBI:15379"/>
        <dbReference type="ChEBI" id="CHEBI:38290"/>
        <dbReference type="ChEBI" id="CHEBI:59513"/>
        <dbReference type="ChEBI" id="CHEBI:59905"/>
        <dbReference type="ChEBI" id="CHEBI:72587"/>
        <dbReference type="EC" id="1.14.17.1"/>
    </reaction>
    <physiologicalReaction direction="left-to-right" evidence="1">
        <dbReference type="Rhea" id="RHEA:19118"/>
    </physiologicalReaction>
</comment>
<comment type="cofactor">
    <cofactor evidence="1">
        <name>Cu(2+)</name>
        <dbReference type="ChEBI" id="CHEBI:29036"/>
    </cofactor>
    <text evidence="1">Binds 2 copper ions per subunit.</text>
</comment>
<comment type="pathway">
    <text evidence="1">Catecholamine biosynthesis; (R)-noradrenaline biosynthesis; (R)-noradrenaline from dopamine: step 1/1.</text>
</comment>
<comment type="subunit">
    <text evidence="1">Homotetramer; composed of two disulfide-linked dimers.</text>
</comment>
<comment type="subcellular location">
    <molecule>Soluble dopamine beta-hydroxylase</molecule>
    <subcellularLocation>
        <location evidence="1">Cytoplasmic vesicle</location>
        <location evidence="1">Secretory vesicle lumen</location>
    </subcellularLocation>
    <subcellularLocation>
        <location evidence="1">Cytoplasmic vesicle</location>
        <location evidence="1">Secretory vesicle</location>
        <location evidence="1">Chromaffin granule lumen</location>
    </subcellularLocation>
    <subcellularLocation>
        <location evidence="1">Secreted</location>
    </subcellularLocation>
</comment>
<comment type="subcellular location">
    <subcellularLocation>
        <location evidence="1">Cytoplasmic vesicle</location>
        <location evidence="1">Secretory vesicle membrane</location>
        <topology evidence="1">Single-pass type II membrane protein</topology>
    </subcellularLocation>
    <subcellularLocation>
        <location evidence="1">Cytoplasmic vesicle</location>
        <location evidence="1">Secretory vesicle</location>
        <location evidence="1">Chromaffin granule membrane</location>
        <topology evidence="1">Single-pass type II membrane protein</topology>
    </subcellularLocation>
</comment>
<comment type="tissue specificity">
    <text evidence="6">Detected in adrenal medulla chromaffin cells.</text>
</comment>
<comment type="PTM">
    <text evidence="2">Proteolytic cleavage after the membrane-anchor leads to the release of the soluble form.</text>
</comment>
<comment type="PTM">
    <text evidence="1">N-glycosylated.</text>
</comment>
<comment type="similarity">
    <text evidence="7">Belongs to the copper type II ascorbate-dependent monooxygenase family.</text>
</comment>